<accession>P08854</accession>
<gene>
    <name type="primary">mopII</name>
</gene>
<protein>
    <recommendedName>
        <fullName>Molybdenum-pterin-binding protein 2</fullName>
    </recommendedName>
    <alternativeName>
        <fullName>Molybdenum-pterin-binding protein II</fullName>
    </alternativeName>
</protein>
<name>MOP2_CLOPA</name>
<proteinExistence type="evidence at protein level"/>
<sequence>MSISARNQLKGKVVGLKKGVVTAEVVLEIAGGNKITSIISLDSVEELGVKEGAELTAVVKSTDVMILA</sequence>
<feature type="chain" id="PRO_0000096533" description="Molybdenum-pterin-binding protein 2">
    <location>
        <begin position="1"/>
        <end position="68"/>
    </location>
</feature>
<feature type="domain" description="Mop" evidence="1">
    <location>
        <begin position="2"/>
        <end position="68"/>
    </location>
</feature>
<feature type="strand" evidence="3">
    <location>
        <begin position="8"/>
        <end position="18"/>
    </location>
</feature>
<feature type="strand" evidence="3">
    <location>
        <begin position="20"/>
        <end position="29"/>
    </location>
</feature>
<feature type="helix" evidence="2">
    <location>
        <begin position="30"/>
        <end position="32"/>
    </location>
</feature>
<feature type="strand" evidence="3">
    <location>
        <begin position="34"/>
        <end position="40"/>
    </location>
</feature>
<feature type="helix" evidence="3">
    <location>
        <begin position="41"/>
        <end position="47"/>
    </location>
</feature>
<feature type="strand" evidence="3">
    <location>
        <begin position="54"/>
        <end position="58"/>
    </location>
</feature>
<feature type="helix" evidence="3">
    <location>
        <begin position="61"/>
        <end position="63"/>
    </location>
</feature>
<feature type="strand" evidence="3">
    <location>
        <begin position="65"/>
        <end position="67"/>
    </location>
</feature>
<keyword id="KW-0002">3D-structure</keyword>
<keyword id="KW-0500">Molybdenum</keyword>
<organism>
    <name type="scientific">Clostridium pasteurianum</name>
    <dbReference type="NCBI Taxonomy" id="1501"/>
    <lineage>
        <taxon>Bacteria</taxon>
        <taxon>Bacillati</taxon>
        <taxon>Bacillota</taxon>
        <taxon>Clostridia</taxon>
        <taxon>Eubacteriales</taxon>
        <taxon>Clostridiaceae</taxon>
        <taxon>Clostridium</taxon>
    </lineage>
</organism>
<comment type="function">
    <text>Binds one mole of molybdenum per mole of protein and contains a pterin.</text>
</comment>
<evidence type="ECO:0000255" key="1">
    <source>
        <dbReference type="PROSITE-ProRule" id="PRU01213"/>
    </source>
</evidence>
<evidence type="ECO:0007829" key="2">
    <source>
        <dbReference type="PDB" id="1GUG"/>
    </source>
</evidence>
<evidence type="ECO:0007829" key="3">
    <source>
        <dbReference type="PDB" id="1GUT"/>
    </source>
</evidence>
<reference key="1">
    <citation type="journal article" date="1987" name="Gene">
        <title>The molybdenum-pterin binding protein is encoded by a multigene family in Clostridium pasteurianum.</title>
        <authorList>
            <person name="Hinton S.M."/>
            <person name="Slaughter C."/>
            <person name="Eisner W."/>
            <person name="Fisher T."/>
        </authorList>
    </citation>
    <scope>NUCLEOTIDE SEQUENCE [GENOMIC DNA]</scope>
</reference>
<dbReference type="EMBL" id="M17158">
    <property type="protein sequence ID" value="AAA23253.1"/>
    <property type="molecule type" value="Genomic_DNA"/>
</dbReference>
<dbReference type="PIR" id="A29094">
    <property type="entry name" value="A29094"/>
</dbReference>
<dbReference type="RefSeq" id="WP_003444576.1">
    <property type="nucleotide sequence ID" value="NZ_LFYL01000010.1"/>
</dbReference>
<dbReference type="PDB" id="1GUG">
    <property type="method" value="X-ray"/>
    <property type="resolution" value="1.60 A"/>
    <property type="chains" value="A/B/C/D/E/F=1-68"/>
</dbReference>
<dbReference type="PDB" id="1GUN">
    <property type="method" value="X-ray"/>
    <property type="resolution" value="1.83 A"/>
    <property type="chains" value="A/B/C/D/E/F=1-68"/>
</dbReference>
<dbReference type="PDB" id="1GUO">
    <property type="method" value="X-ray"/>
    <property type="resolution" value="2.50 A"/>
    <property type="chains" value="A/B/C/D/E/F=1-68"/>
</dbReference>
<dbReference type="PDB" id="1GUS">
    <property type="method" value="X-ray"/>
    <property type="resolution" value="1.80 A"/>
    <property type="chains" value="A/B/C/D/E/F=1-68"/>
</dbReference>
<dbReference type="PDB" id="1GUT">
    <property type="method" value="X-ray"/>
    <property type="resolution" value="1.50 A"/>
    <property type="chains" value="A/B/C/D/E/F=1-68"/>
</dbReference>
<dbReference type="PDBsum" id="1GUG"/>
<dbReference type="PDBsum" id="1GUN"/>
<dbReference type="PDBsum" id="1GUO"/>
<dbReference type="PDBsum" id="1GUS"/>
<dbReference type="PDBsum" id="1GUT"/>
<dbReference type="SMR" id="P08854"/>
<dbReference type="OrthoDB" id="122515at2"/>
<dbReference type="EvolutionaryTrace" id="P08854"/>
<dbReference type="GO" id="GO:0015689">
    <property type="term" value="P:molybdate ion transport"/>
    <property type="evidence" value="ECO:0007669"/>
    <property type="project" value="InterPro"/>
</dbReference>
<dbReference type="Gene3D" id="2.40.50.100">
    <property type="match status" value="1"/>
</dbReference>
<dbReference type="InterPro" id="IPR008995">
    <property type="entry name" value="Mo/tungstate-bd_C_term_dom"/>
</dbReference>
<dbReference type="InterPro" id="IPR004606">
    <property type="entry name" value="Mop_domain"/>
</dbReference>
<dbReference type="InterPro" id="IPR005116">
    <property type="entry name" value="Transp-assoc_OB_typ1"/>
</dbReference>
<dbReference type="NCBIfam" id="TIGR00638">
    <property type="entry name" value="Mop"/>
    <property type="match status" value="1"/>
</dbReference>
<dbReference type="Pfam" id="PF03459">
    <property type="entry name" value="TOBE"/>
    <property type="match status" value="1"/>
</dbReference>
<dbReference type="SUPFAM" id="SSF50331">
    <property type="entry name" value="MOP-like"/>
    <property type="match status" value="1"/>
</dbReference>
<dbReference type="PROSITE" id="PS51866">
    <property type="entry name" value="MOP"/>
    <property type="match status" value="1"/>
</dbReference>